<organism>
    <name type="scientific">Clostridium botulinum (strain 657 / Type Ba4)</name>
    <dbReference type="NCBI Taxonomy" id="515621"/>
    <lineage>
        <taxon>Bacteria</taxon>
        <taxon>Bacillati</taxon>
        <taxon>Bacillota</taxon>
        <taxon>Clostridia</taxon>
        <taxon>Eubacteriales</taxon>
        <taxon>Clostridiaceae</taxon>
        <taxon>Clostridium</taxon>
    </lineage>
</organism>
<comment type="function">
    <text evidence="1">Catalyzes the oxidation of 5,10-methylenetetrahydrofolate to 5,10-methenyltetrahydrofolate and then the hydrolysis of 5,10-methenyltetrahydrofolate to 10-formyltetrahydrofolate.</text>
</comment>
<comment type="catalytic activity">
    <reaction evidence="1">
        <text>(6R)-5,10-methylene-5,6,7,8-tetrahydrofolate + NADP(+) = (6R)-5,10-methenyltetrahydrofolate + NADPH</text>
        <dbReference type="Rhea" id="RHEA:22812"/>
        <dbReference type="ChEBI" id="CHEBI:15636"/>
        <dbReference type="ChEBI" id="CHEBI:57455"/>
        <dbReference type="ChEBI" id="CHEBI:57783"/>
        <dbReference type="ChEBI" id="CHEBI:58349"/>
        <dbReference type="EC" id="1.5.1.5"/>
    </reaction>
</comment>
<comment type="catalytic activity">
    <reaction evidence="1">
        <text>(6R)-5,10-methenyltetrahydrofolate + H2O = (6R)-10-formyltetrahydrofolate + H(+)</text>
        <dbReference type="Rhea" id="RHEA:23700"/>
        <dbReference type="ChEBI" id="CHEBI:15377"/>
        <dbReference type="ChEBI" id="CHEBI:15378"/>
        <dbReference type="ChEBI" id="CHEBI:57455"/>
        <dbReference type="ChEBI" id="CHEBI:195366"/>
        <dbReference type="EC" id="3.5.4.9"/>
    </reaction>
</comment>
<comment type="pathway">
    <text evidence="1">One-carbon metabolism; tetrahydrofolate interconversion.</text>
</comment>
<comment type="subunit">
    <text evidence="1">Homodimer.</text>
</comment>
<comment type="similarity">
    <text evidence="1">Belongs to the tetrahydrofolate dehydrogenase/cyclohydrolase family.</text>
</comment>
<accession>C3KT80</accession>
<name>FOLD_CLOB6</name>
<gene>
    <name evidence="1" type="primary">folD</name>
    <name type="ordered locus">CLJ_B1213</name>
</gene>
<protein>
    <recommendedName>
        <fullName evidence="1">Bifunctional protein FolD</fullName>
    </recommendedName>
    <domain>
        <recommendedName>
            <fullName evidence="1">Methylenetetrahydrofolate dehydrogenase</fullName>
            <ecNumber evidence="1">1.5.1.5</ecNumber>
        </recommendedName>
    </domain>
    <domain>
        <recommendedName>
            <fullName evidence="1">Methenyltetrahydrofolate cyclohydrolase</fullName>
            <ecNumber evidence="1">3.5.4.9</ecNumber>
        </recommendedName>
    </domain>
</protein>
<reference key="1">
    <citation type="submission" date="2008-05" db="EMBL/GenBank/DDBJ databases">
        <title>Genome sequence of Clostridium botulinum Ba4 strain 657.</title>
        <authorList>
            <person name="Shrivastava S."/>
            <person name="Brown J.L."/>
            <person name="Bruce D."/>
            <person name="Detter C."/>
            <person name="Munk C."/>
            <person name="Smith L.A."/>
            <person name="Smith T.J."/>
            <person name="Sutton G."/>
            <person name="Brettin T.S."/>
        </authorList>
    </citation>
    <scope>NUCLEOTIDE SEQUENCE [LARGE SCALE GENOMIC DNA]</scope>
    <source>
        <strain>657 / Type Ba4</strain>
    </source>
</reference>
<feature type="chain" id="PRO_1000215591" description="Bifunctional protein FolD">
    <location>
        <begin position="1"/>
        <end position="282"/>
    </location>
</feature>
<feature type="binding site" evidence="1">
    <location>
        <begin position="165"/>
        <end position="167"/>
    </location>
    <ligand>
        <name>NADP(+)</name>
        <dbReference type="ChEBI" id="CHEBI:58349"/>
    </ligand>
</feature>
<feature type="binding site" evidence="1">
    <location>
        <position position="190"/>
    </location>
    <ligand>
        <name>NADP(+)</name>
        <dbReference type="ChEBI" id="CHEBI:58349"/>
    </ligand>
</feature>
<feature type="binding site" evidence="1">
    <location>
        <position position="231"/>
    </location>
    <ligand>
        <name>NADP(+)</name>
        <dbReference type="ChEBI" id="CHEBI:58349"/>
    </ligand>
</feature>
<keyword id="KW-0028">Amino-acid biosynthesis</keyword>
<keyword id="KW-0368">Histidine biosynthesis</keyword>
<keyword id="KW-0378">Hydrolase</keyword>
<keyword id="KW-0486">Methionine biosynthesis</keyword>
<keyword id="KW-0511">Multifunctional enzyme</keyword>
<keyword id="KW-0521">NADP</keyword>
<keyword id="KW-0554">One-carbon metabolism</keyword>
<keyword id="KW-0560">Oxidoreductase</keyword>
<keyword id="KW-0658">Purine biosynthesis</keyword>
<proteinExistence type="inferred from homology"/>
<sequence>MAKILYGNEVALKIKEDLNLRIGKLKEKNIIPKLAILRMGNKPDDIAYERSIIKSCEKLNIETKVEELNEDILEEDFLKLMESLNNEKETHGILVFRPYPKHLNENIINSSIALNKDVDCMHPLNLERIFEGDLNGFMPCTPEAVIEILKYYDIDLKGKNIVIINRSMVVGKPLSMMVLSHNATVTICHSKTIDLPSITKRADIVVTAIGKAKLIKEEYFNEDSIVIDVSINVDENGKLCGDVDFENVKEKVGAITPVPKGVGSVTTTLLLKHIVDAAERNS</sequence>
<evidence type="ECO:0000255" key="1">
    <source>
        <dbReference type="HAMAP-Rule" id="MF_01576"/>
    </source>
</evidence>
<dbReference type="EC" id="1.5.1.5" evidence="1"/>
<dbReference type="EC" id="3.5.4.9" evidence="1"/>
<dbReference type="EMBL" id="CP001083">
    <property type="protein sequence ID" value="ACQ52314.1"/>
    <property type="molecule type" value="Genomic_DNA"/>
</dbReference>
<dbReference type="RefSeq" id="WP_003361129.1">
    <property type="nucleotide sequence ID" value="NC_012658.1"/>
</dbReference>
<dbReference type="SMR" id="C3KT80"/>
<dbReference type="KEGG" id="cbi:CLJ_B1213"/>
<dbReference type="HOGENOM" id="CLU_034045_2_1_9"/>
<dbReference type="UniPathway" id="UPA00193"/>
<dbReference type="Proteomes" id="UP000002333">
    <property type="component" value="Chromosome"/>
</dbReference>
<dbReference type="GO" id="GO:0005829">
    <property type="term" value="C:cytosol"/>
    <property type="evidence" value="ECO:0007669"/>
    <property type="project" value="TreeGrafter"/>
</dbReference>
<dbReference type="GO" id="GO:0004477">
    <property type="term" value="F:methenyltetrahydrofolate cyclohydrolase activity"/>
    <property type="evidence" value="ECO:0007669"/>
    <property type="project" value="UniProtKB-UniRule"/>
</dbReference>
<dbReference type="GO" id="GO:0004488">
    <property type="term" value="F:methylenetetrahydrofolate dehydrogenase (NADP+) activity"/>
    <property type="evidence" value="ECO:0007669"/>
    <property type="project" value="UniProtKB-UniRule"/>
</dbReference>
<dbReference type="GO" id="GO:0000105">
    <property type="term" value="P:L-histidine biosynthetic process"/>
    <property type="evidence" value="ECO:0007669"/>
    <property type="project" value="UniProtKB-KW"/>
</dbReference>
<dbReference type="GO" id="GO:0009086">
    <property type="term" value="P:methionine biosynthetic process"/>
    <property type="evidence" value="ECO:0007669"/>
    <property type="project" value="UniProtKB-KW"/>
</dbReference>
<dbReference type="GO" id="GO:0006164">
    <property type="term" value="P:purine nucleotide biosynthetic process"/>
    <property type="evidence" value="ECO:0007669"/>
    <property type="project" value="UniProtKB-KW"/>
</dbReference>
<dbReference type="GO" id="GO:0035999">
    <property type="term" value="P:tetrahydrofolate interconversion"/>
    <property type="evidence" value="ECO:0007669"/>
    <property type="project" value="UniProtKB-UniRule"/>
</dbReference>
<dbReference type="CDD" id="cd01080">
    <property type="entry name" value="NAD_bind_m-THF_DH_Cyclohyd"/>
    <property type="match status" value="1"/>
</dbReference>
<dbReference type="FunFam" id="3.40.50.720:FF:000094">
    <property type="entry name" value="Bifunctional protein FolD"/>
    <property type="match status" value="1"/>
</dbReference>
<dbReference type="Gene3D" id="3.40.50.10860">
    <property type="entry name" value="Leucine Dehydrogenase, chain A, domain 1"/>
    <property type="match status" value="1"/>
</dbReference>
<dbReference type="Gene3D" id="3.40.50.720">
    <property type="entry name" value="NAD(P)-binding Rossmann-like Domain"/>
    <property type="match status" value="1"/>
</dbReference>
<dbReference type="HAMAP" id="MF_01576">
    <property type="entry name" value="THF_DHG_CYH"/>
    <property type="match status" value="1"/>
</dbReference>
<dbReference type="InterPro" id="IPR046346">
    <property type="entry name" value="Aminoacid_DH-like_N_sf"/>
</dbReference>
<dbReference type="InterPro" id="IPR036291">
    <property type="entry name" value="NAD(P)-bd_dom_sf"/>
</dbReference>
<dbReference type="InterPro" id="IPR000672">
    <property type="entry name" value="THF_DH/CycHdrlase"/>
</dbReference>
<dbReference type="InterPro" id="IPR020630">
    <property type="entry name" value="THF_DH/CycHdrlase_cat_dom"/>
</dbReference>
<dbReference type="InterPro" id="IPR020631">
    <property type="entry name" value="THF_DH/CycHdrlase_NAD-bd_dom"/>
</dbReference>
<dbReference type="PANTHER" id="PTHR48099:SF5">
    <property type="entry name" value="C-1-TETRAHYDROFOLATE SYNTHASE, CYTOPLASMIC"/>
    <property type="match status" value="1"/>
</dbReference>
<dbReference type="PANTHER" id="PTHR48099">
    <property type="entry name" value="C-1-TETRAHYDROFOLATE SYNTHASE, CYTOPLASMIC-RELATED"/>
    <property type="match status" value="1"/>
</dbReference>
<dbReference type="Pfam" id="PF00763">
    <property type="entry name" value="THF_DHG_CYH"/>
    <property type="match status" value="1"/>
</dbReference>
<dbReference type="Pfam" id="PF02882">
    <property type="entry name" value="THF_DHG_CYH_C"/>
    <property type="match status" value="1"/>
</dbReference>
<dbReference type="PRINTS" id="PR00085">
    <property type="entry name" value="THFDHDRGNASE"/>
</dbReference>
<dbReference type="SUPFAM" id="SSF53223">
    <property type="entry name" value="Aminoacid dehydrogenase-like, N-terminal domain"/>
    <property type="match status" value="1"/>
</dbReference>
<dbReference type="SUPFAM" id="SSF51735">
    <property type="entry name" value="NAD(P)-binding Rossmann-fold domains"/>
    <property type="match status" value="1"/>
</dbReference>